<organism>
    <name type="scientific">Bordetella avium (strain 197N)</name>
    <dbReference type="NCBI Taxonomy" id="360910"/>
    <lineage>
        <taxon>Bacteria</taxon>
        <taxon>Pseudomonadati</taxon>
        <taxon>Pseudomonadota</taxon>
        <taxon>Betaproteobacteria</taxon>
        <taxon>Burkholderiales</taxon>
        <taxon>Alcaligenaceae</taxon>
        <taxon>Bordetella</taxon>
    </lineage>
</organism>
<comment type="function">
    <text evidence="1">Bifunctional enzyme with both catalase and broad-spectrum peroxidase activity.</text>
</comment>
<comment type="catalytic activity">
    <reaction evidence="1">
        <text>H2O2 + AH2 = A + 2 H2O</text>
        <dbReference type="Rhea" id="RHEA:30275"/>
        <dbReference type="ChEBI" id="CHEBI:13193"/>
        <dbReference type="ChEBI" id="CHEBI:15377"/>
        <dbReference type="ChEBI" id="CHEBI:16240"/>
        <dbReference type="ChEBI" id="CHEBI:17499"/>
        <dbReference type="EC" id="1.11.1.21"/>
    </reaction>
</comment>
<comment type="catalytic activity">
    <reaction evidence="1">
        <text>2 H2O2 = O2 + 2 H2O</text>
        <dbReference type="Rhea" id="RHEA:20309"/>
        <dbReference type="ChEBI" id="CHEBI:15377"/>
        <dbReference type="ChEBI" id="CHEBI:15379"/>
        <dbReference type="ChEBI" id="CHEBI:16240"/>
        <dbReference type="EC" id="1.11.1.21"/>
    </reaction>
</comment>
<comment type="cofactor">
    <cofactor evidence="1">
        <name>heme b</name>
        <dbReference type="ChEBI" id="CHEBI:60344"/>
    </cofactor>
    <text evidence="1">Binds 1 heme b (iron(II)-protoporphyrin IX) group per dimer.</text>
</comment>
<comment type="subunit">
    <text evidence="1">Homodimer or homotetramer.</text>
</comment>
<comment type="PTM">
    <text evidence="1">Formation of the three residue Trp-Tyr-Met cross-link is important for the catalase, but not the peroxidase activity of the enzyme.</text>
</comment>
<comment type="similarity">
    <text evidence="1">Belongs to the peroxidase family. Peroxidase/catalase subfamily.</text>
</comment>
<comment type="sequence caution" evidence="3">
    <conflict type="erroneous initiation">
        <sequence resource="EMBL-CDS" id="CAJ51027"/>
    </conflict>
</comment>
<protein>
    <recommendedName>
        <fullName evidence="1">Catalase-peroxidase</fullName>
        <shortName evidence="1">CP</shortName>
        <ecNumber evidence="1">1.11.1.21</ecNumber>
    </recommendedName>
    <alternativeName>
        <fullName evidence="1">Peroxidase/catalase</fullName>
    </alternativeName>
</protein>
<dbReference type="EC" id="1.11.1.21" evidence="1"/>
<dbReference type="EMBL" id="AM167904">
    <property type="protein sequence ID" value="CAJ51027.1"/>
    <property type="status" value="ALT_INIT"/>
    <property type="molecule type" value="Genomic_DNA"/>
</dbReference>
<dbReference type="RefSeq" id="WP_039051346.1">
    <property type="nucleotide sequence ID" value="NC_010645.1"/>
</dbReference>
<dbReference type="SMR" id="Q2KTI4"/>
<dbReference type="STRING" id="360910.BAV3417"/>
<dbReference type="PeroxiBase" id="3418">
    <property type="entry name" value="BavCP01"/>
</dbReference>
<dbReference type="GeneID" id="92936768"/>
<dbReference type="KEGG" id="bav:BAV3417"/>
<dbReference type="eggNOG" id="COG0376">
    <property type="taxonomic scope" value="Bacteria"/>
</dbReference>
<dbReference type="HOGENOM" id="CLU_025424_2_0_4"/>
<dbReference type="OrthoDB" id="9759743at2"/>
<dbReference type="Proteomes" id="UP000001977">
    <property type="component" value="Chromosome"/>
</dbReference>
<dbReference type="GO" id="GO:0005829">
    <property type="term" value="C:cytosol"/>
    <property type="evidence" value="ECO:0007669"/>
    <property type="project" value="TreeGrafter"/>
</dbReference>
<dbReference type="GO" id="GO:0004096">
    <property type="term" value="F:catalase activity"/>
    <property type="evidence" value="ECO:0007669"/>
    <property type="project" value="UniProtKB-UniRule"/>
</dbReference>
<dbReference type="GO" id="GO:0020037">
    <property type="term" value="F:heme binding"/>
    <property type="evidence" value="ECO:0007669"/>
    <property type="project" value="InterPro"/>
</dbReference>
<dbReference type="GO" id="GO:0046872">
    <property type="term" value="F:metal ion binding"/>
    <property type="evidence" value="ECO:0007669"/>
    <property type="project" value="UniProtKB-KW"/>
</dbReference>
<dbReference type="GO" id="GO:0070301">
    <property type="term" value="P:cellular response to hydrogen peroxide"/>
    <property type="evidence" value="ECO:0007669"/>
    <property type="project" value="TreeGrafter"/>
</dbReference>
<dbReference type="GO" id="GO:0042744">
    <property type="term" value="P:hydrogen peroxide catabolic process"/>
    <property type="evidence" value="ECO:0007669"/>
    <property type="project" value="UniProtKB-KW"/>
</dbReference>
<dbReference type="CDD" id="cd00649">
    <property type="entry name" value="catalase_peroxidase_1"/>
    <property type="match status" value="1"/>
</dbReference>
<dbReference type="CDD" id="cd08200">
    <property type="entry name" value="catalase_peroxidase_2"/>
    <property type="match status" value="1"/>
</dbReference>
<dbReference type="FunFam" id="1.10.420.10:FF:000002">
    <property type="entry name" value="Catalase-peroxidase"/>
    <property type="match status" value="1"/>
</dbReference>
<dbReference type="FunFam" id="1.10.420.10:FF:000004">
    <property type="entry name" value="Catalase-peroxidase"/>
    <property type="match status" value="1"/>
</dbReference>
<dbReference type="FunFam" id="1.10.520.10:FF:000002">
    <property type="entry name" value="Catalase-peroxidase"/>
    <property type="match status" value="1"/>
</dbReference>
<dbReference type="FunFam" id="1.10.520.10:FF:000004">
    <property type="entry name" value="Catalase-peroxidase"/>
    <property type="match status" value="1"/>
</dbReference>
<dbReference type="Gene3D" id="1.10.520.10">
    <property type="match status" value="2"/>
</dbReference>
<dbReference type="Gene3D" id="1.10.420.10">
    <property type="entry name" value="Peroxidase, domain 2"/>
    <property type="match status" value="2"/>
</dbReference>
<dbReference type="HAMAP" id="MF_01961">
    <property type="entry name" value="Catal_peroxid"/>
    <property type="match status" value="1"/>
</dbReference>
<dbReference type="InterPro" id="IPR000763">
    <property type="entry name" value="Catalase_peroxidase"/>
</dbReference>
<dbReference type="InterPro" id="IPR002016">
    <property type="entry name" value="Haem_peroxidase"/>
</dbReference>
<dbReference type="InterPro" id="IPR010255">
    <property type="entry name" value="Haem_peroxidase_sf"/>
</dbReference>
<dbReference type="InterPro" id="IPR019794">
    <property type="entry name" value="Peroxidases_AS"/>
</dbReference>
<dbReference type="InterPro" id="IPR019793">
    <property type="entry name" value="Peroxidases_heam-ligand_BS"/>
</dbReference>
<dbReference type="NCBIfam" id="TIGR00198">
    <property type="entry name" value="cat_per_HPI"/>
    <property type="match status" value="1"/>
</dbReference>
<dbReference type="NCBIfam" id="NF011635">
    <property type="entry name" value="PRK15061.1"/>
    <property type="match status" value="1"/>
</dbReference>
<dbReference type="PANTHER" id="PTHR30555:SF0">
    <property type="entry name" value="CATALASE-PEROXIDASE"/>
    <property type="match status" value="1"/>
</dbReference>
<dbReference type="PANTHER" id="PTHR30555">
    <property type="entry name" value="HYDROPEROXIDASE I, BIFUNCTIONAL CATALASE-PEROXIDASE"/>
    <property type="match status" value="1"/>
</dbReference>
<dbReference type="Pfam" id="PF00141">
    <property type="entry name" value="peroxidase"/>
    <property type="match status" value="2"/>
</dbReference>
<dbReference type="PRINTS" id="PR00460">
    <property type="entry name" value="BPEROXIDASE"/>
</dbReference>
<dbReference type="PRINTS" id="PR00458">
    <property type="entry name" value="PEROXIDASE"/>
</dbReference>
<dbReference type="SUPFAM" id="SSF48113">
    <property type="entry name" value="Heme-dependent peroxidases"/>
    <property type="match status" value="2"/>
</dbReference>
<dbReference type="PROSITE" id="PS00435">
    <property type="entry name" value="PEROXIDASE_1"/>
    <property type="match status" value="1"/>
</dbReference>
<dbReference type="PROSITE" id="PS00436">
    <property type="entry name" value="PEROXIDASE_2"/>
    <property type="match status" value="1"/>
</dbReference>
<dbReference type="PROSITE" id="PS50873">
    <property type="entry name" value="PEROXIDASE_4"/>
    <property type="match status" value="1"/>
</dbReference>
<name>KATG_BORA1</name>
<proteinExistence type="inferred from homology"/>
<gene>
    <name evidence="1" type="primary">katG</name>
    <name type="ordered locus">BAV3417</name>
</gene>
<feature type="chain" id="PRO_0000354726" description="Catalase-peroxidase">
    <location>
        <begin position="1"/>
        <end position="748"/>
    </location>
</feature>
<feature type="region of interest" description="Disordered" evidence="2">
    <location>
        <begin position="201"/>
        <end position="223"/>
    </location>
</feature>
<feature type="compositionally biased region" description="Basic and acidic residues" evidence="2">
    <location>
        <begin position="207"/>
        <end position="221"/>
    </location>
</feature>
<feature type="active site" description="Proton acceptor" evidence="1">
    <location>
        <position position="92"/>
    </location>
</feature>
<feature type="binding site" description="axial binding residue" evidence="1">
    <location>
        <position position="277"/>
    </location>
    <ligand>
        <name>heme b</name>
        <dbReference type="ChEBI" id="CHEBI:60344"/>
    </ligand>
    <ligandPart>
        <name>Fe</name>
        <dbReference type="ChEBI" id="CHEBI:18248"/>
    </ligandPart>
</feature>
<feature type="site" description="Transition state stabilizer" evidence="1">
    <location>
        <position position="88"/>
    </location>
</feature>
<feature type="cross-link" description="Tryptophyl-tyrosyl-methioninium (Trp-Tyr) (with M-262)" evidence="1">
    <location>
        <begin position="91"/>
        <end position="236"/>
    </location>
</feature>
<feature type="cross-link" description="Tryptophyl-tyrosyl-methioninium (Tyr-Met) (with W-91)" evidence="1">
    <location>
        <begin position="236"/>
        <end position="262"/>
    </location>
</feature>
<sequence>MSNEAKCPFNHTAGSGTTNQDWWPKRLRLELLSQHSAKTNPLDPDFDYAKAFNSLDLAAVKQDLAKLMTDSQDWWPADFGHYGPLFIRMAWHSAGTYRVGDGRGGAGRGQQRFAPLNSWPDNVSLDKARRLLWPIKKKYGNKISWADLFILTGNVALETMGFKTFGFGGGREDTWEPDQDVYWGDEKTWLGGDLRYGKNEAQPVADKAGHGKEHGRTDGGRNLENPLAAVQMGLIYVNPEGPDGNPDPQASAHDIRETFARMAMNDEETVALIAGGHTFGKTHGAGPADNVGPEPEAAELENQGLGWKNSFGTGKGSDTITSGLEVTWTSTPTKWSNNFFWNLFGYEWELTKSPAGAHQWIPKHGAGAGSVPDAHDPSKRHVPSMLTSDIALRVDPAYEKIARRFFENPDEFADAFARAWFKLTHRDMGPRVRYLGPEVPAEDLIWQDPIPKVNHPLVDDQDVAALKQKVLASGLSVSELVSTAWASASTFRGSDKRGGANGARIRLAPQKDWAVNQPEQLAKVLKVLEGIQADFNGKQSGGKKVSLADLIVLAGCAAIEQAAGQAGHKVTVPFTAGRMDASQEQTDVASFAPLEPVHDGFRNFLKSRYDVPAEHLLIDRAQLLTLTAPEMTVLIGGLRVLDVHTDKEKHGVFTDRPGVLTNDFFRNLIDMGTEWKPSSPARESFTGHDRKTGKQKWTASRVDLVFGSNSQLRALSEVYASDDAQDKFVRDFIAAWTKVMNLDRFDLK</sequence>
<keyword id="KW-0349">Heme</keyword>
<keyword id="KW-0376">Hydrogen peroxide</keyword>
<keyword id="KW-0408">Iron</keyword>
<keyword id="KW-0479">Metal-binding</keyword>
<keyword id="KW-0560">Oxidoreductase</keyword>
<keyword id="KW-0575">Peroxidase</keyword>
<keyword id="KW-1185">Reference proteome</keyword>
<accession>Q2KTI4</accession>
<reference key="1">
    <citation type="journal article" date="2006" name="J. Bacteriol.">
        <title>Comparison of the genome sequence of the poultry pathogen Bordetella avium with those of B. bronchiseptica, B. pertussis, and B. parapertussis reveals extensive diversity in surface structures associated with host interaction.</title>
        <authorList>
            <person name="Sebaihia M."/>
            <person name="Preston A."/>
            <person name="Maskell D.J."/>
            <person name="Kuzmiak H."/>
            <person name="Connell T.D."/>
            <person name="King N.D."/>
            <person name="Orndorff P.E."/>
            <person name="Miyamoto D.M."/>
            <person name="Thomson N.R."/>
            <person name="Harris D."/>
            <person name="Goble A."/>
            <person name="Lord A."/>
            <person name="Murphy L."/>
            <person name="Quail M.A."/>
            <person name="Rutter S."/>
            <person name="Squares R."/>
            <person name="Squares S."/>
            <person name="Woodward J."/>
            <person name="Parkhill J."/>
            <person name="Temple L.M."/>
        </authorList>
    </citation>
    <scope>NUCLEOTIDE SEQUENCE [LARGE SCALE GENOMIC DNA]</scope>
    <source>
        <strain>197N</strain>
    </source>
</reference>
<evidence type="ECO:0000255" key="1">
    <source>
        <dbReference type="HAMAP-Rule" id="MF_01961"/>
    </source>
</evidence>
<evidence type="ECO:0000256" key="2">
    <source>
        <dbReference type="SAM" id="MobiDB-lite"/>
    </source>
</evidence>
<evidence type="ECO:0000305" key="3"/>